<organism>
    <name type="scientific">Vibrio vulnificus (strain YJ016)</name>
    <dbReference type="NCBI Taxonomy" id="196600"/>
    <lineage>
        <taxon>Bacteria</taxon>
        <taxon>Pseudomonadati</taxon>
        <taxon>Pseudomonadota</taxon>
        <taxon>Gammaproteobacteria</taxon>
        <taxon>Vibrionales</taxon>
        <taxon>Vibrionaceae</taxon>
        <taxon>Vibrio</taxon>
    </lineage>
</organism>
<feature type="chain" id="PRO_0000197494" description="Glutathione synthetase">
    <location>
        <begin position="1"/>
        <end position="318"/>
    </location>
</feature>
<feature type="domain" description="ATP-grasp" evidence="2">
    <location>
        <begin position="125"/>
        <end position="311"/>
    </location>
</feature>
<feature type="binding site" evidence="2">
    <location>
        <begin position="151"/>
        <end position="208"/>
    </location>
    <ligand>
        <name>ATP</name>
        <dbReference type="ChEBI" id="CHEBI:30616"/>
    </ligand>
</feature>
<feature type="binding site" evidence="2">
    <location>
        <position position="282"/>
    </location>
    <ligand>
        <name>Mg(2+)</name>
        <dbReference type="ChEBI" id="CHEBI:18420"/>
    </ligand>
</feature>
<feature type="binding site" evidence="2">
    <location>
        <position position="284"/>
    </location>
    <ligand>
        <name>Mg(2+)</name>
        <dbReference type="ChEBI" id="CHEBI:18420"/>
    </ligand>
</feature>
<proteinExistence type="inferred from homology"/>
<comment type="catalytic activity">
    <reaction evidence="2">
        <text>gamma-L-glutamyl-L-cysteine + glycine + ATP = glutathione + ADP + phosphate + H(+)</text>
        <dbReference type="Rhea" id="RHEA:13557"/>
        <dbReference type="ChEBI" id="CHEBI:15378"/>
        <dbReference type="ChEBI" id="CHEBI:30616"/>
        <dbReference type="ChEBI" id="CHEBI:43474"/>
        <dbReference type="ChEBI" id="CHEBI:57305"/>
        <dbReference type="ChEBI" id="CHEBI:57925"/>
        <dbReference type="ChEBI" id="CHEBI:58173"/>
        <dbReference type="ChEBI" id="CHEBI:456216"/>
        <dbReference type="EC" id="6.3.2.3"/>
    </reaction>
</comment>
<comment type="cofactor">
    <cofactor evidence="1">
        <name>Mg(2+)</name>
        <dbReference type="ChEBI" id="CHEBI:18420"/>
    </cofactor>
    <cofactor evidence="1">
        <name>Mn(2+)</name>
        <dbReference type="ChEBI" id="CHEBI:29035"/>
    </cofactor>
    <text evidence="1">Binds 1 Mg(2+) or Mn(2+) ion per subunit.</text>
</comment>
<comment type="pathway">
    <text evidence="2">Sulfur metabolism; glutathione biosynthesis; glutathione from L-cysteine and L-glutamate: step 2/2.</text>
</comment>
<comment type="similarity">
    <text evidence="2">Belongs to the prokaryotic GSH synthase family.</text>
</comment>
<reference key="1">
    <citation type="journal article" date="2003" name="Genome Res.">
        <title>Comparative genome analysis of Vibrio vulnificus, a marine pathogen.</title>
        <authorList>
            <person name="Chen C.-Y."/>
            <person name="Wu K.-M."/>
            <person name="Chang Y.-C."/>
            <person name="Chang C.-H."/>
            <person name="Tsai H.-C."/>
            <person name="Liao T.-L."/>
            <person name="Liu Y.-M."/>
            <person name="Chen H.-J."/>
            <person name="Shen A.B.-T."/>
            <person name="Li J.-C."/>
            <person name="Su T.-L."/>
            <person name="Shao C.-P."/>
            <person name="Lee C.-T."/>
            <person name="Hor L.-I."/>
            <person name="Tsai S.-F."/>
        </authorList>
    </citation>
    <scope>NUCLEOTIDE SEQUENCE [LARGE SCALE GENOMIC DNA]</scope>
    <source>
        <strain>YJ016</strain>
    </source>
</reference>
<dbReference type="EC" id="6.3.2.3" evidence="2"/>
<dbReference type="EMBL" id="BA000037">
    <property type="protein sequence ID" value="BAC95632.1"/>
    <property type="molecule type" value="Genomic_DNA"/>
</dbReference>
<dbReference type="SMR" id="Q7MHK1"/>
<dbReference type="STRING" id="672.VV93_v1c25750"/>
<dbReference type="KEGG" id="vvy:VV2868"/>
<dbReference type="eggNOG" id="COG0189">
    <property type="taxonomic scope" value="Bacteria"/>
</dbReference>
<dbReference type="HOGENOM" id="CLU_068239_0_0_6"/>
<dbReference type="UniPathway" id="UPA00142">
    <property type="reaction ID" value="UER00210"/>
</dbReference>
<dbReference type="Proteomes" id="UP000002675">
    <property type="component" value="Chromosome I"/>
</dbReference>
<dbReference type="GO" id="GO:0005737">
    <property type="term" value="C:cytoplasm"/>
    <property type="evidence" value="ECO:0007669"/>
    <property type="project" value="TreeGrafter"/>
</dbReference>
<dbReference type="GO" id="GO:0005524">
    <property type="term" value="F:ATP binding"/>
    <property type="evidence" value="ECO:0007669"/>
    <property type="project" value="UniProtKB-UniRule"/>
</dbReference>
<dbReference type="GO" id="GO:0004363">
    <property type="term" value="F:glutathione synthase activity"/>
    <property type="evidence" value="ECO:0007669"/>
    <property type="project" value="UniProtKB-UniRule"/>
</dbReference>
<dbReference type="GO" id="GO:0046872">
    <property type="term" value="F:metal ion binding"/>
    <property type="evidence" value="ECO:0007669"/>
    <property type="project" value="UniProtKB-KW"/>
</dbReference>
<dbReference type="FunFam" id="3.30.1490.20:FF:000009">
    <property type="entry name" value="Glutathione synthetase"/>
    <property type="match status" value="1"/>
</dbReference>
<dbReference type="FunFam" id="3.30.470.20:FF:000010">
    <property type="entry name" value="Glutathione synthetase"/>
    <property type="match status" value="1"/>
</dbReference>
<dbReference type="FunFam" id="3.40.50.20:FF:000009">
    <property type="entry name" value="Glutathione synthetase"/>
    <property type="match status" value="1"/>
</dbReference>
<dbReference type="Gene3D" id="3.40.50.20">
    <property type="match status" value="1"/>
</dbReference>
<dbReference type="Gene3D" id="3.30.1490.20">
    <property type="entry name" value="ATP-grasp fold, A domain"/>
    <property type="match status" value="1"/>
</dbReference>
<dbReference type="Gene3D" id="3.30.470.20">
    <property type="entry name" value="ATP-grasp fold, B domain"/>
    <property type="match status" value="1"/>
</dbReference>
<dbReference type="HAMAP" id="MF_00162">
    <property type="entry name" value="GSH_S"/>
    <property type="match status" value="1"/>
</dbReference>
<dbReference type="InterPro" id="IPR011761">
    <property type="entry name" value="ATP-grasp"/>
</dbReference>
<dbReference type="InterPro" id="IPR013815">
    <property type="entry name" value="ATP_grasp_subdomain_1"/>
</dbReference>
<dbReference type="InterPro" id="IPR006284">
    <property type="entry name" value="Glut_synth_pro"/>
</dbReference>
<dbReference type="InterPro" id="IPR004218">
    <property type="entry name" value="GSHS_ATP-bd"/>
</dbReference>
<dbReference type="InterPro" id="IPR004215">
    <property type="entry name" value="GSHS_N"/>
</dbReference>
<dbReference type="InterPro" id="IPR016185">
    <property type="entry name" value="PreATP-grasp_dom_sf"/>
</dbReference>
<dbReference type="NCBIfam" id="TIGR01380">
    <property type="entry name" value="glut_syn"/>
    <property type="match status" value="1"/>
</dbReference>
<dbReference type="NCBIfam" id="NF003573">
    <property type="entry name" value="PRK05246.1"/>
    <property type="match status" value="1"/>
</dbReference>
<dbReference type="PANTHER" id="PTHR21621:SF4">
    <property type="entry name" value="GLUTATHIONE SYNTHETASE"/>
    <property type="match status" value="1"/>
</dbReference>
<dbReference type="PANTHER" id="PTHR21621">
    <property type="entry name" value="RIBOSOMAL PROTEIN S6 MODIFICATION PROTEIN"/>
    <property type="match status" value="1"/>
</dbReference>
<dbReference type="Pfam" id="PF02955">
    <property type="entry name" value="GSH-S_ATP"/>
    <property type="match status" value="1"/>
</dbReference>
<dbReference type="Pfam" id="PF02951">
    <property type="entry name" value="GSH-S_N"/>
    <property type="match status" value="1"/>
</dbReference>
<dbReference type="SUPFAM" id="SSF56059">
    <property type="entry name" value="Glutathione synthetase ATP-binding domain-like"/>
    <property type="match status" value="1"/>
</dbReference>
<dbReference type="SUPFAM" id="SSF52440">
    <property type="entry name" value="PreATP-grasp domain"/>
    <property type="match status" value="1"/>
</dbReference>
<dbReference type="PROSITE" id="PS50975">
    <property type="entry name" value="ATP_GRASP"/>
    <property type="match status" value="1"/>
</dbReference>
<keyword id="KW-0067">ATP-binding</keyword>
<keyword id="KW-0317">Glutathione biosynthesis</keyword>
<keyword id="KW-0436">Ligase</keyword>
<keyword id="KW-0460">Magnesium</keyword>
<keyword id="KW-0464">Manganese</keyword>
<keyword id="KW-0479">Metal-binding</keyword>
<keyword id="KW-0547">Nucleotide-binding</keyword>
<accession>Q7MHK1</accession>
<name>GSHB_VIBVY</name>
<evidence type="ECO:0000250" key="1"/>
<evidence type="ECO:0000255" key="2">
    <source>
        <dbReference type="HAMAP-Rule" id="MF_00162"/>
    </source>
</evidence>
<protein>
    <recommendedName>
        <fullName evidence="2">Glutathione synthetase</fullName>
        <ecNumber evidence="2">6.3.2.3</ecNumber>
    </recommendedName>
    <alternativeName>
        <fullName evidence="2">GSH synthetase</fullName>
        <shortName evidence="2">GSH-S</shortName>
        <shortName evidence="2">GSHase</shortName>
    </alternativeName>
    <alternativeName>
        <fullName evidence="2">Glutathione synthase</fullName>
    </alternativeName>
</protein>
<gene>
    <name evidence="2" type="primary">gshB</name>
    <name type="ordered locus">VV2868</name>
</gene>
<sequence>MMIKLGIVMDPISSINIKKDSSFAMMLEAQRRGWEIHYMEMNDLHLDQGVAIADTKVVQLKEDPNGWYEFTSEQTIELSELDAVLMRKDPPFDTEYIYATYILERAEEQGTLIVNKPQSLRDCNEKLFTAWFPELTPTTIVTRKAEKIKAFRQEHGDIILKPLDGMGGASIFRVKENDPNVSVIIETLTNHGQNYAMAQTFVPDISNGDKRILVVDGEPMPYCLARIPAKGETRGNLAAGGSGEPRPLSETDLKIANAVAPTLKEKGLIFVGLDVIGDKLTEINVTSPTCIREIEAAFDISITGKLMDAIERRLQAQA</sequence>